<reference key="1">
    <citation type="journal article" date="2004" name="Genome Res.">
        <title>The complete genome and proteome of Mycoplasma mobile.</title>
        <authorList>
            <person name="Jaffe J.D."/>
            <person name="Stange-Thomann N."/>
            <person name="Smith C."/>
            <person name="DeCaprio D."/>
            <person name="Fisher S."/>
            <person name="Butler J."/>
            <person name="Calvo S."/>
            <person name="Elkins T."/>
            <person name="FitzGerald M.G."/>
            <person name="Hafez N."/>
            <person name="Kodira C.D."/>
            <person name="Major J."/>
            <person name="Wang S."/>
            <person name="Wilkinson J."/>
            <person name="Nicol R."/>
            <person name="Nusbaum C."/>
            <person name="Birren B."/>
            <person name="Berg H.C."/>
            <person name="Church G.M."/>
        </authorList>
    </citation>
    <scope>NUCLEOTIDE SEQUENCE [LARGE SCALE GENOMIC DNA]</scope>
    <source>
        <strain>ATCC 43663 / NCTC 11711 / 163 K</strain>
    </source>
</reference>
<comment type="function">
    <text evidence="1">One of two assembly initiator proteins, it binds directly to the 5'-end of the 23S rRNA, where it nucleates assembly of the 50S subunit.</text>
</comment>
<comment type="function">
    <text evidence="1">One of the proteins that surrounds the polypeptide exit tunnel on the outside of the subunit.</text>
</comment>
<comment type="subunit">
    <text evidence="1">Part of the 50S ribosomal subunit.</text>
</comment>
<comment type="similarity">
    <text evidence="1">Belongs to the universal ribosomal protein uL24 family.</text>
</comment>
<keyword id="KW-1185">Reference proteome</keyword>
<keyword id="KW-0687">Ribonucleoprotein</keyword>
<keyword id="KW-0689">Ribosomal protein</keyword>
<keyword id="KW-0694">RNA-binding</keyword>
<keyword id="KW-0699">rRNA-binding</keyword>
<proteinExistence type="inferred from homology"/>
<evidence type="ECO:0000255" key="1">
    <source>
        <dbReference type="HAMAP-Rule" id="MF_01326"/>
    </source>
</evidence>
<evidence type="ECO:0000305" key="2"/>
<dbReference type="EMBL" id="AE017308">
    <property type="protein sequence ID" value="AAT27732.1"/>
    <property type="molecule type" value="Genomic_DNA"/>
</dbReference>
<dbReference type="RefSeq" id="WP_011264766.1">
    <property type="nucleotide sequence ID" value="NC_006908.1"/>
</dbReference>
<dbReference type="SMR" id="Q6KI44"/>
<dbReference type="STRING" id="267748.MMOB2460"/>
<dbReference type="KEGG" id="mmo:MMOB2460"/>
<dbReference type="eggNOG" id="COG0198">
    <property type="taxonomic scope" value="Bacteria"/>
</dbReference>
<dbReference type="HOGENOM" id="CLU_093315_2_2_14"/>
<dbReference type="OrthoDB" id="9807419at2"/>
<dbReference type="Proteomes" id="UP000009072">
    <property type="component" value="Chromosome"/>
</dbReference>
<dbReference type="GO" id="GO:1990904">
    <property type="term" value="C:ribonucleoprotein complex"/>
    <property type="evidence" value="ECO:0007669"/>
    <property type="project" value="UniProtKB-KW"/>
</dbReference>
<dbReference type="GO" id="GO:0005840">
    <property type="term" value="C:ribosome"/>
    <property type="evidence" value="ECO:0007669"/>
    <property type="project" value="UniProtKB-KW"/>
</dbReference>
<dbReference type="GO" id="GO:0019843">
    <property type="term" value="F:rRNA binding"/>
    <property type="evidence" value="ECO:0007669"/>
    <property type="project" value="UniProtKB-UniRule"/>
</dbReference>
<dbReference type="GO" id="GO:0003735">
    <property type="term" value="F:structural constituent of ribosome"/>
    <property type="evidence" value="ECO:0007669"/>
    <property type="project" value="InterPro"/>
</dbReference>
<dbReference type="GO" id="GO:0006412">
    <property type="term" value="P:translation"/>
    <property type="evidence" value="ECO:0007669"/>
    <property type="project" value="UniProtKB-UniRule"/>
</dbReference>
<dbReference type="CDD" id="cd06089">
    <property type="entry name" value="KOW_RPL26"/>
    <property type="match status" value="1"/>
</dbReference>
<dbReference type="Gene3D" id="2.30.30.30">
    <property type="match status" value="1"/>
</dbReference>
<dbReference type="HAMAP" id="MF_01326_B">
    <property type="entry name" value="Ribosomal_uL24_B"/>
    <property type="match status" value="1"/>
</dbReference>
<dbReference type="InterPro" id="IPR005824">
    <property type="entry name" value="KOW"/>
</dbReference>
<dbReference type="InterPro" id="IPR014722">
    <property type="entry name" value="Rib_uL2_dom2"/>
</dbReference>
<dbReference type="InterPro" id="IPR003256">
    <property type="entry name" value="Ribosomal_uL24"/>
</dbReference>
<dbReference type="InterPro" id="IPR005825">
    <property type="entry name" value="Ribosomal_uL24_CS"/>
</dbReference>
<dbReference type="InterPro" id="IPR041988">
    <property type="entry name" value="Ribosomal_uL24_KOW"/>
</dbReference>
<dbReference type="InterPro" id="IPR008991">
    <property type="entry name" value="Translation_prot_SH3-like_sf"/>
</dbReference>
<dbReference type="NCBIfam" id="TIGR01079">
    <property type="entry name" value="rplX_bact"/>
    <property type="match status" value="1"/>
</dbReference>
<dbReference type="PANTHER" id="PTHR12903">
    <property type="entry name" value="MITOCHONDRIAL RIBOSOMAL PROTEIN L24"/>
    <property type="match status" value="1"/>
</dbReference>
<dbReference type="Pfam" id="PF00467">
    <property type="entry name" value="KOW"/>
    <property type="match status" value="1"/>
</dbReference>
<dbReference type="Pfam" id="PF17136">
    <property type="entry name" value="ribosomal_L24"/>
    <property type="match status" value="1"/>
</dbReference>
<dbReference type="SMART" id="SM00739">
    <property type="entry name" value="KOW"/>
    <property type="match status" value="1"/>
</dbReference>
<dbReference type="SUPFAM" id="SSF50104">
    <property type="entry name" value="Translation proteins SH3-like domain"/>
    <property type="match status" value="1"/>
</dbReference>
<dbReference type="PROSITE" id="PS01108">
    <property type="entry name" value="RIBOSOMAL_L24"/>
    <property type="match status" value="1"/>
</dbReference>
<feature type="chain" id="PRO_0000241623" description="Large ribosomal subunit protein uL24">
    <location>
        <begin position="1"/>
        <end position="125"/>
    </location>
</feature>
<organism>
    <name type="scientific">Mycoplasma mobile (strain ATCC 43663 / 163K / NCTC 11711)</name>
    <name type="common">Mesomycoplasma mobile</name>
    <dbReference type="NCBI Taxonomy" id="267748"/>
    <lineage>
        <taxon>Bacteria</taxon>
        <taxon>Bacillati</taxon>
        <taxon>Mycoplasmatota</taxon>
        <taxon>Mycoplasmoidales</taxon>
        <taxon>Metamycoplasmataceae</taxon>
        <taxon>Mesomycoplasma</taxon>
    </lineage>
</organism>
<protein>
    <recommendedName>
        <fullName evidence="1">Large ribosomal subunit protein uL24</fullName>
    </recommendedName>
    <alternativeName>
        <fullName evidence="2">50S ribosomal protein L24</fullName>
    </alternativeName>
</protein>
<name>RL24_MYCM1</name>
<accession>Q6KI44</accession>
<sequence length="125" mass="13997">MKLQKSKLHKNDQVLIISGKFKGRSGQIIAIDYKNETVKVRDINKVTKHVKPTQQKTEGGIETFEAGIHISNVALKFKTPKLKSKDKATSDTSITPLSAKEHTKIGYKIENNKKVRIAKRTGKSI</sequence>
<gene>
    <name evidence="1" type="primary">rplX</name>
    <name type="ordered locus">MMOB2460</name>
</gene>